<evidence type="ECO:0000250" key="1"/>
<evidence type="ECO:0000256" key="2">
    <source>
        <dbReference type="SAM" id="MobiDB-lite"/>
    </source>
</evidence>
<protein>
    <recommendedName>
        <fullName>Respiration factor 1</fullName>
    </recommendedName>
</protein>
<feature type="chain" id="PRO_0000320478" description="Respiration factor 1">
    <location>
        <begin position="1"/>
        <end position="376"/>
    </location>
</feature>
<feature type="region of interest" description="Disordered" evidence="2">
    <location>
        <begin position="1"/>
        <end position="23"/>
    </location>
</feature>
<feature type="region of interest" description="Disordered" evidence="2">
    <location>
        <begin position="88"/>
        <end position="107"/>
    </location>
</feature>
<feature type="region of interest" description="Disordered" evidence="2">
    <location>
        <begin position="258"/>
        <end position="279"/>
    </location>
</feature>
<feature type="region of interest" description="Disordered" evidence="2">
    <location>
        <begin position="347"/>
        <end position="376"/>
    </location>
</feature>
<feature type="compositionally biased region" description="Low complexity" evidence="2">
    <location>
        <begin position="354"/>
        <end position="376"/>
    </location>
</feature>
<keyword id="KW-0010">Activator</keyword>
<keyword id="KW-0963">Cytoplasm</keyword>
<keyword id="KW-0496">Mitochondrion</keyword>
<keyword id="KW-0539">Nucleus</keyword>
<keyword id="KW-0804">Transcription</keyword>
<keyword id="KW-0805">Transcription regulation</keyword>
<sequence length="376" mass="43460">MKDLNPEMGKFATTKGPPQDNRGMVDIATLPNFPANRSGTPREEMYLAPNKMETPRILNMNMVPDYLQKENFSPDFSSATVSAKSSPVNVTHDESLPLGTIESNSTKDSKYAVQRQQQQVVDFIENNMQLLSSETLNFRSDIMKTLELPIPKRRDIKGNHLSKLLFAKSPLTINTYCQFYDRRTKRICNQEMIWKDKNSREKHGSRKYQRHLSKVHDVQLTPNNFTEFFDHNSPLFQECYDYQSRLMRDLLVEPDAKFKEKKKKKKGDVNGNHPETGSSLINHQVQQQNVRELQSKIAMNDLIEILIDLNIPFSVLDYQPMRNWLIKYSIISTDTLPDEVYFKTDPGVNELEHNSSNLNNSNSGTPHNHNQNQHTN</sequence>
<reference key="1">
    <citation type="journal article" date="2007" name="Proc. Natl. Acad. Sci. U.S.A.">
        <title>Genome sequencing and comparative analysis of Saccharomyces cerevisiae strain YJM789.</title>
        <authorList>
            <person name="Wei W."/>
            <person name="McCusker J.H."/>
            <person name="Hyman R.W."/>
            <person name="Jones T."/>
            <person name="Ning Y."/>
            <person name="Cao Z."/>
            <person name="Gu Z."/>
            <person name="Bruno D."/>
            <person name="Miranda M."/>
            <person name="Nguyen M."/>
            <person name="Wilhelmy J."/>
            <person name="Komp C."/>
            <person name="Tamse R."/>
            <person name="Wang X."/>
            <person name="Jia P."/>
            <person name="Luedi P."/>
            <person name="Oefner P.J."/>
            <person name="David L."/>
            <person name="Dietrich F.S."/>
            <person name="Li Y."/>
            <person name="Davis R.W."/>
            <person name="Steinmetz L.M."/>
        </authorList>
    </citation>
    <scope>NUCLEOTIDE SEQUENCE [LARGE SCALE GENOMIC DNA]</scope>
    <source>
        <strain>YJM789</strain>
    </source>
</reference>
<comment type="function">
    <text evidence="1">Mitochondrial and nuclear transcriptional activator required for respiratory growth.</text>
</comment>
<comment type="subcellular location">
    <subcellularLocation>
        <location evidence="1">Cytoplasm</location>
    </subcellularLocation>
    <subcellularLocation>
        <location evidence="1">Nucleus</location>
    </subcellularLocation>
    <subcellularLocation>
        <location evidence="1">Mitochondrion</location>
    </subcellularLocation>
</comment>
<comment type="induction">
    <text evidence="1">During respiratory growth.</text>
</comment>
<proteinExistence type="inferred from homology"/>
<organism>
    <name type="scientific">Saccharomyces cerevisiae (strain YJM789)</name>
    <name type="common">Baker's yeast</name>
    <dbReference type="NCBI Taxonomy" id="307796"/>
    <lineage>
        <taxon>Eukaryota</taxon>
        <taxon>Fungi</taxon>
        <taxon>Dikarya</taxon>
        <taxon>Ascomycota</taxon>
        <taxon>Saccharomycotina</taxon>
        <taxon>Saccharomycetes</taxon>
        <taxon>Saccharomycetales</taxon>
        <taxon>Saccharomycetaceae</taxon>
        <taxon>Saccharomyces</taxon>
    </lineage>
</organism>
<accession>A6ZM92</accession>
<name>RSF1_YEAS7</name>
<gene>
    <name type="primary">RSF1</name>
    <name type="ORF">SCY_4204</name>
</gene>
<dbReference type="EMBL" id="AAFW02000020">
    <property type="protein sequence ID" value="EDN64422.1"/>
    <property type="molecule type" value="Genomic_DNA"/>
</dbReference>
<dbReference type="SMR" id="A6ZM92"/>
<dbReference type="HOGENOM" id="CLU_736105_0_0_1"/>
<dbReference type="Proteomes" id="UP000007060">
    <property type="component" value="Unassembled WGS sequence"/>
</dbReference>
<dbReference type="GO" id="GO:0005739">
    <property type="term" value="C:mitochondrion"/>
    <property type="evidence" value="ECO:0007669"/>
    <property type="project" value="UniProtKB-SubCell"/>
</dbReference>
<dbReference type="GO" id="GO:0005634">
    <property type="term" value="C:nucleus"/>
    <property type="evidence" value="ECO:0007669"/>
    <property type="project" value="UniProtKB-SubCell"/>
</dbReference>
<dbReference type="GO" id="GO:0045333">
    <property type="term" value="P:cellular respiration"/>
    <property type="evidence" value="ECO:0007669"/>
    <property type="project" value="InterPro"/>
</dbReference>
<dbReference type="InterPro" id="IPR027998">
    <property type="entry name" value="Rsf1_fungi"/>
</dbReference>
<dbReference type="Pfam" id="PF14876">
    <property type="entry name" value="RSF"/>
    <property type="match status" value="1"/>
</dbReference>